<protein>
    <recommendedName>
        <fullName evidence="1">Small ribosomal subunit protein uS11c</fullName>
    </recommendedName>
    <alternativeName>
        <fullName evidence="3">30S ribosomal protein S11, chloroplastic</fullName>
    </alternativeName>
</protein>
<sequence>MAKSISKIGSRKNARIGSRKQTRKIPKGVIYVQASFNNTIVTVTDVRGRVISWSSAGSCGFKGTRRGTPFAAQTAAANAIRTVVDQGMQRAEVIIKGPGLGRDAALRAIRRSGILLRFIRDVTPMPHNGCRAPKKRRV</sequence>
<dbReference type="EMBL" id="EU835853">
    <property type="protein sequence ID" value="ACH41102.1"/>
    <property type="molecule type" value="Genomic_DNA"/>
</dbReference>
<dbReference type="RefSeq" id="YP_002149765.1">
    <property type="nucleotide sequence ID" value="NC_011163.1"/>
</dbReference>
<dbReference type="SMR" id="B5LMQ6"/>
<dbReference type="PaxDb" id="3827-XP_004514800.1"/>
<dbReference type="GeneID" id="101506503"/>
<dbReference type="GeneID" id="6797509"/>
<dbReference type="KEGG" id="cam:101506503"/>
<dbReference type="KEGG" id="cam:6797509"/>
<dbReference type="eggNOG" id="KOG0408">
    <property type="taxonomic scope" value="Eukaryota"/>
</dbReference>
<dbReference type="OrthoDB" id="1338064at2759"/>
<dbReference type="Proteomes" id="UP000087171">
    <property type="component" value="Chloroplast Pltd"/>
</dbReference>
<dbReference type="GO" id="GO:0009507">
    <property type="term" value="C:chloroplast"/>
    <property type="evidence" value="ECO:0007669"/>
    <property type="project" value="UniProtKB-SubCell"/>
</dbReference>
<dbReference type="GO" id="GO:1990904">
    <property type="term" value="C:ribonucleoprotein complex"/>
    <property type="evidence" value="ECO:0007669"/>
    <property type="project" value="UniProtKB-KW"/>
</dbReference>
<dbReference type="GO" id="GO:0005840">
    <property type="term" value="C:ribosome"/>
    <property type="evidence" value="ECO:0007669"/>
    <property type="project" value="UniProtKB-KW"/>
</dbReference>
<dbReference type="GO" id="GO:0019843">
    <property type="term" value="F:rRNA binding"/>
    <property type="evidence" value="ECO:0007669"/>
    <property type="project" value="UniProtKB-UniRule"/>
</dbReference>
<dbReference type="GO" id="GO:0003735">
    <property type="term" value="F:structural constituent of ribosome"/>
    <property type="evidence" value="ECO:0007669"/>
    <property type="project" value="InterPro"/>
</dbReference>
<dbReference type="GO" id="GO:0006412">
    <property type="term" value="P:translation"/>
    <property type="evidence" value="ECO:0007669"/>
    <property type="project" value="UniProtKB-UniRule"/>
</dbReference>
<dbReference type="FunFam" id="3.30.420.80:FF:000003">
    <property type="entry name" value="30S ribosomal protein S11, chloroplastic"/>
    <property type="match status" value="1"/>
</dbReference>
<dbReference type="Gene3D" id="3.30.420.80">
    <property type="entry name" value="Ribosomal protein S11"/>
    <property type="match status" value="1"/>
</dbReference>
<dbReference type="HAMAP" id="MF_01310">
    <property type="entry name" value="Ribosomal_uS11"/>
    <property type="match status" value="1"/>
</dbReference>
<dbReference type="InterPro" id="IPR001971">
    <property type="entry name" value="Ribosomal_uS11"/>
</dbReference>
<dbReference type="InterPro" id="IPR019981">
    <property type="entry name" value="Ribosomal_uS11_bac-type"/>
</dbReference>
<dbReference type="InterPro" id="IPR018102">
    <property type="entry name" value="Ribosomal_uS11_CS"/>
</dbReference>
<dbReference type="InterPro" id="IPR036967">
    <property type="entry name" value="Ribosomal_uS11_sf"/>
</dbReference>
<dbReference type="NCBIfam" id="NF003698">
    <property type="entry name" value="PRK05309.1"/>
    <property type="match status" value="1"/>
</dbReference>
<dbReference type="NCBIfam" id="TIGR03632">
    <property type="entry name" value="uS11_bact"/>
    <property type="match status" value="1"/>
</dbReference>
<dbReference type="PANTHER" id="PTHR11759">
    <property type="entry name" value="40S RIBOSOMAL PROTEIN S14/30S RIBOSOMAL PROTEIN S11"/>
    <property type="match status" value="1"/>
</dbReference>
<dbReference type="Pfam" id="PF00411">
    <property type="entry name" value="Ribosomal_S11"/>
    <property type="match status" value="1"/>
</dbReference>
<dbReference type="PIRSF" id="PIRSF002131">
    <property type="entry name" value="Ribosomal_S11"/>
    <property type="match status" value="1"/>
</dbReference>
<dbReference type="SUPFAM" id="SSF53137">
    <property type="entry name" value="Translational machinery components"/>
    <property type="match status" value="1"/>
</dbReference>
<dbReference type="PROSITE" id="PS00054">
    <property type="entry name" value="RIBOSOMAL_S11"/>
    <property type="match status" value="1"/>
</dbReference>
<accession>B5LMQ6</accession>
<comment type="subunit">
    <text evidence="1">Part of the 30S ribosomal subunit.</text>
</comment>
<comment type="subcellular location">
    <subcellularLocation>
        <location>Plastid</location>
        <location>Chloroplast</location>
    </subcellularLocation>
</comment>
<comment type="similarity">
    <text evidence="1">Belongs to the universal ribosomal protein uS11 family.</text>
</comment>
<keyword id="KW-0150">Chloroplast</keyword>
<keyword id="KW-0934">Plastid</keyword>
<keyword id="KW-1185">Reference proteome</keyword>
<keyword id="KW-0687">Ribonucleoprotein</keyword>
<keyword id="KW-0689">Ribosomal protein</keyword>
<keyword id="KW-0694">RNA-binding</keyword>
<keyword id="KW-0699">rRNA-binding</keyword>
<gene>
    <name evidence="1" type="primary">rps11</name>
</gene>
<feature type="chain" id="PRO_0000364211" description="Small ribosomal subunit protein uS11c">
    <location>
        <begin position="1"/>
        <end position="138"/>
    </location>
</feature>
<feature type="region of interest" description="Disordered" evidence="2">
    <location>
        <begin position="1"/>
        <end position="21"/>
    </location>
</feature>
<feature type="compositionally biased region" description="Basic residues" evidence="2">
    <location>
        <begin position="9"/>
        <end position="21"/>
    </location>
</feature>
<proteinExistence type="inferred from homology"/>
<organism>
    <name type="scientific">Cicer arietinum</name>
    <name type="common">Chickpea</name>
    <name type="synonym">Garbanzo</name>
    <dbReference type="NCBI Taxonomy" id="3827"/>
    <lineage>
        <taxon>Eukaryota</taxon>
        <taxon>Viridiplantae</taxon>
        <taxon>Streptophyta</taxon>
        <taxon>Embryophyta</taxon>
        <taxon>Tracheophyta</taxon>
        <taxon>Spermatophyta</taxon>
        <taxon>Magnoliopsida</taxon>
        <taxon>eudicotyledons</taxon>
        <taxon>Gunneridae</taxon>
        <taxon>Pentapetalae</taxon>
        <taxon>rosids</taxon>
        <taxon>fabids</taxon>
        <taxon>Fabales</taxon>
        <taxon>Fabaceae</taxon>
        <taxon>Papilionoideae</taxon>
        <taxon>50 kb inversion clade</taxon>
        <taxon>NPAAA clade</taxon>
        <taxon>Hologalegina</taxon>
        <taxon>IRL clade</taxon>
        <taxon>Cicereae</taxon>
        <taxon>Cicer</taxon>
    </lineage>
</organism>
<evidence type="ECO:0000255" key="1">
    <source>
        <dbReference type="HAMAP-Rule" id="MF_01310"/>
    </source>
</evidence>
<evidence type="ECO:0000256" key="2">
    <source>
        <dbReference type="SAM" id="MobiDB-lite"/>
    </source>
</evidence>
<evidence type="ECO:0000305" key="3"/>
<geneLocation type="chloroplast"/>
<reference key="1">
    <citation type="journal article" date="2008" name="Mol. Phylogenet. Evol.">
        <title>Complete plastid genome sequence of the chickpea (Cicer arietinum) and the phylogenetic distribution of rps12 and clpP intron losses among legumes (Leguminosae).</title>
        <authorList>
            <person name="Jansen R.K."/>
            <person name="Wojciechowski M.F."/>
            <person name="Sanniyasi E."/>
            <person name="Lee S.-B."/>
            <person name="Daniell H."/>
        </authorList>
    </citation>
    <scope>NUCLEOTIDE SEQUENCE [LARGE SCALE GENOMIC DNA]</scope>
</reference>
<name>RR11_CICAR</name>